<feature type="chain" id="PRO_0000218554" description="Pre-mRNA-splicing factor SLU7">
    <location>
        <begin position="1"/>
        <end position="382"/>
    </location>
</feature>
<feature type="zinc finger region" description="CCHC-type" evidence="1">
    <location>
        <begin position="120"/>
        <end position="137"/>
    </location>
</feature>
<feature type="region of interest" description="Disordered" evidence="2">
    <location>
        <begin position="1"/>
        <end position="72"/>
    </location>
</feature>
<feature type="region of interest" description="Interaction with PRP8">
    <location>
        <begin position="200"/>
        <end position="224"/>
    </location>
</feature>
<feature type="region of interest" description="Disordered" evidence="2">
    <location>
        <begin position="362"/>
        <end position="382"/>
    </location>
</feature>
<feature type="compositionally biased region" description="Low complexity" evidence="2">
    <location>
        <begin position="1"/>
        <end position="15"/>
    </location>
</feature>
<feature type="compositionally biased region" description="Basic and acidic residues" evidence="2">
    <location>
        <begin position="46"/>
        <end position="58"/>
    </location>
</feature>
<feature type="modified residue" description="Phosphoserine" evidence="22">
    <location>
        <position position="120"/>
    </location>
</feature>
<feature type="modified residue" description="Phosphothreonine" evidence="21 22 23">
    <location>
        <position position="212"/>
    </location>
</feature>
<feature type="mutagenesis site" description="Affects the ability to associate with the spliceosome. Loss of growth and in vitro splicing activity; when associated with 215-AAA-217. Cryo- and thermosensitivity; when associated with A-217." evidence="7">
    <original>C</original>
    <variation>A</variation>
    <location>
        <position position="122"/>
    </location>
</feature>
<feature type="mutagenesis site" description="Affects the ability to associate with the spliceosome. Loss of growth and in vitro splicing activity; when associated with 215-AAA-217. Cryo- and thermosensitivity; when associated with A-217." evidence="7">
    <original>H</original>
    <variation>A</variation>
    <location>
        <position position="130"/>
    </location>
</feature>
<feature type="mutagenesis site" description="Affects the ability to associate with the spliceosome. Loss of growth, spliceosome binding, and in vitro splicing activity; when associated with 215-AAA-217. Cryo- and thermosensitivity; when associated with A-217." evidence="7">
    <original>C</original>
    <variation>A</variation>
    <location>
        <position position="135"/>
    </location>
</feature>
<feature type="mutagenesis site" description="Abolishes the interaction with PRP18, and temperature sensitive growth defect. Loss of growth and in vitro splicing activity; when associated with A-122 or A-130 or A-135." evidence="7">
    <original>EIE</original>
    <variation>AAA</variation>
    <location>
        <begin position="215"/>
        <end position="217"/>
    </location>
</feature>
<feature type="mutagenesis site" description="Abolishes the interaction with PRP18. Cryo- and thermosensitivity; when associated with A-122 or A-130 or A-135." evidence="7">
    <original>E</original>
    <variation>A</variation>
    <location>
        <position position="217"/>
    </location>
</feature>
<feature type="mutagenesis site" description="Abolishes the interaction with PRP18, and temperature sensitive growth defect." evidence="7">
    <original>E</original>
    <variation>K</variation>
    <location>
        <position position="217"/>
    </location>
</feature>
<feature type="mutagenesis site" description="Abolishes the interaction with PRP18, and temperature sensitive growth defect." evidence="7">
    <original>LELY</original>
    <variation>AAAA</variation>
    <location>
        <begin position="221"/>
        <end position="224"/>
    </location>
</feature>
<feature type="sequence conflict" description="In Ref. 4; AAS56027." evidence="20" ref="4">
    <original>D</original>
    <variation>G</variation>
    <location>
        <position position="235"/>
    </location>
</feature>
<feature type="helix" evidence="25">
    <location>
        <begin position="35"/>
        <end position="38"/>
    </location>
</feature>
<feature type="turn" evidence="25">
    <location>
        <begin position="42"/>
        <end position="44"/>
    </location>
</feature>
<feature type="helix" evidence="25">
    <location>
        <begin position="74"/>
        <end position="76"/>
    </location>
</feature>
<feature type="turn" evidence="25">
    <location>
        <begin position="123"/>
        <end position="125"/>
    </location>
</feature>
<feature type="strand" evidence="25">
    <location>
        <begin position="128"/>
        <end position="130"/>
    </location>
</feature>
<feature type="helix" evidence="25">
    <location>
        <begin position="132"/>
        <end position="134"/>
    </location>
</feature>
<feature type="helix" evidence="25">
    <location>
        <begin position="167"/>
        <end position="171"/>
    </location>
</feature>
<feature type="turn" evidence="25">
    <location>
        <begin position="173"/>
        <end position="176"/>
    </location>
</feature>
<feature type="helix" evidence="25">
    <location>
        <begin position="180"/>
        <end position="195"/>
    </location>
</feature>
<feature type="helix" evidence="25">
    <location>
        <begin position="213"/>
        <end position="221"/>
    </location>
</feature>
<feature type="strand" evidence="25">
    <location>
        <begin position="249"/>
        <end position="251"/>
    </location>
</feature>
<feature type="helix" evidence="25">
    <location>
        <begin position="254"/>
        <end position="258"/>
    </location>
</feature>
<feature type="strand" evidence="24">
    <location>
        <begin position="259"/>
        <end position="263"/>
    </location>
</feature>
<feature type="turn" evidence="25">
    <location>
        <begin position="268"/>
        <end position="270"/>
    </location>
</feature>
<feature type="turn" evidence="25">
    <location>
        <begin position="276"/>
        <end position="278"/>
    </location>
</feature>
<feature type="strand" evidence="25">
    <location>
        <begin position="279"/>
        <end position="281"/>
    </location>
</feature>
<feature type="strand" evidence="25">
    <location>
        <begin position="283"/>
        <end position="285"/>
    </location>
</feature>
<feature type="strand" evidence="25">
    <location>
        <begin position="288"/>
        <end position="290"/>
    </location>
</feature>
<feature type="helix" evidence="25">
    <location>
        <begin position="295"/>
        <end position="312"/>
    </location>
</feature>
<feature type="strand" evidence="25">
    <location>
        <begin position="317"/>
        <end position="319"/>
    </location>
</feature>
<feature type="helix" evidence="25">
    <location>
        <begin position="322"/>
        <end position="327"/>
    </location>
</feature>
<feature type="turn" evidence="25">
    <location>
        <begin position="329"/>
        <end position="331"/>
    </location>
</feature>
<feature type="helix" evidence="25">
    <location>
        <begin position="333"/>
        <end position="343"/>
    </location>
</feature>
<feature type="turn" evidence="25">
    <location>
        <begin position="344"/>
        <end position="346"/>
    </location>
</feature>
<keyword id="KW-0002">3D-structure</keyword>
<keyword id="KW-0325">Glycoprotein</keyword>
<keyword id="KW-0479">Metal-binding</keyword>
<keyword id="KW-0507">mRNA processing</keyword>
<keyword id="KW-0508">mRNA splicing</keyword>
<keyword id="KW-0539">Nucleus</keyword>
<keyword id="KW-0597">Phosphoprotein</keyword>
<keyword id="KW-1185">Reference proteome</keyword>
<keyword id="KW-0747">Spliceosome</keyword>
<keyword id="KW-0862">Zinc</keyword>
<keyword id="KW-0863">Zinc-finger</keyword>
<accession>Q02775</accession>
<accession>D6VS75</accession>
<accession>P89902</accession>
<accession>Q6Q5U3</accession>
<proteinExistence type="evidence at protein level"/>
<dbReference type="EMBL" id="X67810">
    <property type="protein sequence ID" value="CAA48011.1"/>
    <property type="molecule type" value="Genomic_DNA"/>
</dbReference>
<dbReference type="EMBL" id="X82086">
    <property type="protein sequence ID" value="CAA57617.1"/>
    <property type="molecule type" value="Genomic_DNA"/>
</dbReference>
<dbReference type="EMBL" id="Z46796">
    <property type="protein sequence ID" value="CAA86810.1"/>
    <property type="molecule type" value="Genomic_DNA"/>
</dbReference>
<dbReference type="EMBL" id="Z74384">
    <property type="protein sequence ID" value="CAA98908.1"/>
    <property type="molecule type" value="Genomic_DNA"/>
</dbReference>
<dbReference type="EMBL" id="Z74385">
    <property type="protein sequence ID" value="CAA98909.1"/>
    <property type="molecule type" value="Genomic_DNA"/>
</dbReference>
<dbReference type="EMBL" id="AY557701">
    <property type="protein sequence ID" value="AAS56027.1"/>
    <property type="molecule type" value="Genomic_DNA"/>
</dbReference>
<dbReference type="EMBL" id="BK006938">
    <property type="protein sequence ID" value="DAA11935.1"/>
    <property type="molecule type" value="Genomic_DNA"/>
</dbReference>
<dbReference type="PIR" id="A46229">
    <property type="entry name" value="A46229"/>
</dbReference>
<dbReference type="RefSeq" id="NP_010373.3">
    <property type="nucleotide sequence ID" value="NM_001180396.3"/>
</dbReference>
<dbReference type="PDB" id="5MPS">
    <property type="method" value="EM"/>
    <property type="resolution" value="3.85 A"/>
    <property type="chains" value="c=1-382"/>
</dbReference>
<dbReference type="PDB" id="5MQ0">
    <property type="method" value="EM"/>
    <property type="resolution" value="4.17 A"/>
    <property type="chains" value="c=1-382"/>
</dbReference>
<dbReference type="PDB" id="5YLZ">
    <property type="method" value="EM"/>
    <property type="resolution" value="3.60 A"/>
    <property type="chains" value="V=1-382"/>
</dbReference>
<dbReference type="PDB" id="6BK8">
    <property type="method" value="EM"/>
    <property type="resolution" value="3.30 A"/>
    <property type="chains" value="O=1-382"/>
</dbReference>
<dbReference type="PDB" id="6EXN">
    <property type="method" value="EM"/>
    <property type="resolution" value="3.70 A"/>
    <property type="chains" value="c=1-382"/>
</dbReference>
<dbReference type="PDB" id="9DTR">
    <property type="method" value="EM"/>
    <property type="resolution" value="2.31 A"/>
    <property type="chains" value="c=1-382"/>
</dbReference>
<dbReference type="PDBsum" id="5MPS"/>
<dbReference type="PDBsum" id="5MQ0"/>
<dbReference type="PDBsum" id="5YLZ"/>
<dbReference type="PDBsum" id="6BK8"/>
<dbReference type="PDBsum" id="6EXN"/>
<dbReference type="PDBsum" id="9DTR"/>
<dbReference type="EMDB" id="EMD-3539"/>
<dbReference type="EMDB" id="EMD-3541"/>
<dbReference type="EMDB" id="EMD-3979"/>
<dbReference type="EMDB" id="EMD-47157"/>
<dbReference type="EMDB" id="EMD-6839"/>
<dbReference type="EMDB" id="EMD-7109"/>
<dbReference type="SMR" id="Q02775"/>
<dbReference type="BioGRID" id="32144">
    <property type="interactions" value="481"/>
</dbReference>
<dbReference type="ComplexPortal" id="CPX-1651">
    <property type="entry name" value="PRP19-associated complex"/>
</dbReference>
<dbReference type="DIP" id="DIP-220N"/>
<dbReference type="FunCoup" id="Q02775">
    <property type="interactions" value="597"/>
</dbReference>
<dbReference type="IntAct" id="Q02775">
    <property type="interactions" value="35"/>
</dbReference>
<dbReference type="MINT" id="Q02775"/>
<dbReference type="STRING" id="4932.YDR088C"/>
<dbReference type="iPTMnet" id="Q02775"/>
<dbReference type="PaxDb" id="4932-YDR088C"/>
<dbReference type="PeptideAtlas" id="Q02775"/>
<dbReference type="EnsemblFungi" id="YDR088C_mRNA">
    <property type="protein sequence ID" value="YDR088C"/>
    <property type="gene ID" value="YDR088C"/>
</dbReference>
<dbReference type="GeneID" id="851661"/>
<dbReference type="KEGG" id="sce:YDR088C"/>
<dbReference type="AGR" id="SGD:S000002495"/>
<dbReference type="SGD" id="S000002495">
    <property type="gene designation" value="SLU7"/>
</dbReference>
<dbReference type="VEuPathDB" id="FungiDB:YDR088C"/>
<dbReference type="eggNOG" id="KOG2560">
    <property type="taxonomic scope" value="Eukaryota"/>
</dbReference>
<dbReference type="HOGENOM" id="CLU_072877_0_0_1"/>
<dbReference type="InParanoid" id="Q02775"/>
<dbReference type="OMA" id="KSKMFRR"/>
<dbReference type="OrthoDB" id="249612at2759"/>
<dbReference type="BioCyc" id="YEAST:G3O-29693-MONOMER"/>
<dbReference type="BioGRID-ORCS" id="851661">
    <property type="hits" value="4 hits in 10 CRISPR screens"/>
</dbReference>
<dbReference type="PRO" id="PR:Q02775"/>
<dbReference type="Proteomes" id="UP000002311">
    <property type="component" value="Chromosome IV"/>
</dbReference>
<dbReference type="RNAct" id="Q02775">
    <property type="molecule type" value="protein"/>
</dbReference>
<dbReference type="GO" id="GO:0000974">
    <property type="term" value="C:Prp19 complex"/>
    <property type="evidence" value="ECO:0000353"/>
    <property type="project" value="ComplexPortal"/>
</dbReference>
<dbReference type="GO" id="GO:0005681">
    <property type="term" value="C:spliceosomal complex"/>
    <property type="evidence" value="ECO:0000314"/>
    <property type="project" value="SGD"/>
</dbReference>
<dbReference type="GO" id="GO:0071021">
    <property type="term" value="C:U2-type post-spliceosomal complex"/>
    <property type="evidence" value="ECO:0000314"/>
    <property type="project" value="SGD"/>
</dbReference>
<dbReference type="GO" id="GO:0030628">
    <property type="term" value="F:pre-mRNA 3'-splice site binding"/>
    <property type="evidence" value="ECO:0007669"/>
    <property type="project" value="InterPro"/>
</dbReference>
<dbReference type="GO" id="GO:0008270">
    <property type="term" value="F:zinc ion binding"/>
    <property type="evidence" value="ECO:0007669"/>
    <property type="project" value="UniProtKB-KW"/>
</dbReference>
<dbReference type="GO" id="GO:0000350">
    <property type="term" value="P:generation of catalytic spliceosome for second transesterification step"/>
    <property type="evidence" value="ECO:0000314"/>
    <property type="project" value="SGD"/>
</dbReference>
<dbReference type="GO" id="GO:0000398">
    <property type="term" value="P:mRNA splicing, via spliceosome"/>
    <property type="evidence" value="ECO:0000303"/>
    <property type="project" value="ComplexPortal"/>
</dbReference>
<dbReference type="InterPro" id="IPR021715">
    <property type="entry name" value="Slu7_dom"/>
</dbReference>
<dbReference type="InterPro" id="IPR039974">
    <property type="entry name" value="Splicing_factor_SLU7"/>
</dbReference>
<dbReference type="InterPro" id="IPR001878">
    <property type="entry name" value="Znf_CCHC"/>
</dbReference>
<dbReference type="InterPro" id="IPR036875">
    <property type="entry name" value="Znf_CCHC_sf"/>
</dbReference>
<dbReference type="PANTHER" id="PTHR12942:SF2">
    <property type="entry name" value="PRE-MRNA-SPLICING FACTOR SLU7"/>
    <property type="match status" value="1"/>
</dbReference>
<dbReference type="PANTHER" id="PTHR12942">
    <property type="entry name" value="STEP II SPLICING FACTOR SLU7"/>
    <property type="match status" value="1"/>
</dbReference>
<dbReference type="Pfam" id="PF11708">
    <property type="entry name" value="Slu7"/>
    <property type="match status" value="1"/>
</dbReference>
<dbReference type="SUPFAM" id="SSF57756">
    <property type="entry name" value="Retrovirus zinc finger-like domains"/>
    <property type="match status" value="1"/>
</dbReference>
<dbReference type="PROSITE" id="PS50158">
    <property type="entry name" value="ZF_CCHC"/>
    <property type="match status" value="1"/>
</dbReference>
<sequence>MNNNSRNNENRSTINRNKRQLQQAKEKNENIHIPRYIRNQPWYYKDTPKEQEGKKPGNDDTSTAEGGEKSDYLVHHRQKAKGGALDIDNNSEPKIGMGIKDEFKLIRPQKMSVRDSHSLSFCRNCGEAGHKEKDCMEKPRKMQKLVPDLNSQKNNGTVLVRATDDDWDSRKDRWYGYSGKEYNELISKWERDKRNKIKGKDKSQTDETLWDTDEEIELMKLELYKDSVGSLKKDDADNSQLYRTSTRLREDKAAYLNDINSTESNYDPKSRLYKTETLGAVDEKSKMFRRHLTGEGLKLNELNQFARSHAKEMGIRDEIEDKEKVQHVLVANPTKYEYLKKKREQEETKQPKIVSIGDLEARKVDGTKQSEEQRNHLKDLYG</sequence>
<name>SLU7_YEAST</name>
<evidence type="ECO:0000255" key="1">
    <source>
        <dbReference type="PROSITE-ProRule" id="PRU00047"/>
    </source>
</evidence>
<evidence type="ECO:0000256" key="2">
    <source>
        <dbReference type="SAM" id="MobiDB-lite"/>
    </source>
</evidence>
<evidence type="ECO:0000269" key="3">
    <source>
    </source>
</evidence>
<evidence type="ECO:0000269" key="4">
    <source>
    </source>
</evidence>
<evidence type="ECO:0000269" key="5">
    <source>
    </source>
</evidence>
<evidence type="ECO:0000269" key="6">
    <source>
    </source>
</evidence>
<evidence type="ECO:0000269" key="7">
    <source>
    </source>
</evidence>
<evidence type="ECO:0000269" key="8">
    <source>
    </source>
</evidence>
<evidence type="ECO:0000269" key="9">
    <source>
    </source>
</evidence>
<evidence type="ECO:0000269" key="10">
    <source>
    </source>
</evidence>
<evidence type="ECO:0000269" key="11">
    <source>
    </source>
</evidence>
<evidence type="ECO:0000269" key="12">
    <source>
    </source>
</evidence>
<evidence type="ECO:0000269" key="13">
    <source>
    </source>
</evidence>
<evidence type="ECO:0000269" key="14">
    <source>
    </source>
</evidence>
<evidence type="ECO:0000269" key="15">
    <source>
    </source>
</evidence>
<evidence type="ECO:0000269" key="16">
    <source>
    </source>
</evidence>
<evidence type="ECO:0000269" key="17">
    <source>
    </source>
</evidence>
<evidence type="ECO:0000269" key="18">
    <source>
    </source>
</evidence>
<evidence type="ECO:0000269" key="19">
    <source>
    </source>
</evidence>
<evidence type="ECO:0000305" key="20"/>
<evidence type="ECO:0007744" key="21">
    <source>
    </source>
</evidence>
<evidence type="ECO:0007744" key="22">
    <source>
    </source>
</evidence>
<evidence type="ECO:0007744" key="23">
    <source>
    </source>
</evidence>
<evidence type="ECO:0007829" key="24">
    <source>
        <dbReference type="PDB" id="6BK8"/>
    </source>
</evidence>
<evidence type="ECO:0007829" key="25">
    <source>
        <dbReference type="PDB" id="9DTR"/>
    </source>
</evidence>
<comment type="function">
    <text evidence="4 7 9 10 15 16 17 18 19">Essential protein involved in the second catalytic step of pre-mRNA splicing. Involved in the selection of 3'-type splice sites; this selection could be done via a 3'-splice site-binding factor, PRP16.</text>
</comment>
<comment type="subunit">
    <text evidence="3 4 5 6 7 8 14 18">Belongs to the CWC complex (or CEF1-associated complex), a spliceosome sub-complex reminiscent of a late-stage spliceosome composed of the U2, U5 and U6 snRNAs and at least BUD13, BUD31, BRR2, CDC40, CEF1, CLF1, CUS1, CWC2, CWC15, CWC21, CWC22, CWC23, CWC24, CWC25, CWC27, ECM2, HSH155, IST3, ISY1, LEA1, MSL1, NTC20, PRP8, PRP9, PRP11, PRP19, PRP21, PRP22, PRP45, PRP46, SLU7, SMB1, SMD1, SMD2, SMD3, SMX2, SMX3, SNT309, SNU114, SPP2, SYF1, SYF2, RSE1 and YJU2. Interacts with BRR2, ECM2, PRP18 and PRP22.</text>
</comment>
<comment type="subcellular location">
    <subcellularLocation>
        <location evidence="11">Nucleus</location>
    </subcellularLocation>
</comment>
<comment type="domain">
    <text>The CCHC-type zinc finger probably plays a role in the ability of SLU7 to bypass the requirement for PRP18.</text>
</comment>
<comment type="PTM">
    <text evidence="13">N-glycosylated.</text>
</comment>
<comment type="miscellaneous">
    <text evidence="12">Present with 1490 molecules/cell in log phase SD medium.</text>
</comment>
<comment type="similarity">
    <text evidence="20">Belongs to the SLU7 family.</text>
</comment>
<organism>
    <name type="scientific">Saccharomyces cerevisiae (strain ATCC 204508 / S288c)</name>
    <name type="common">Baker's yeast</name>
    <dbReference type="NCBI Taxonomy" id="559292"/>
    <lineage>
        <taxon>Eukaryota</taxon>
        <taxon>Fungi</taxon>
        <taxon>Dikarya</taxon>
        <taxon>Ascomycota</taxon>
        <taxon>Saccharomycotina</taxon>
        <taxon>Saccharomycetes</taxon>
        <taxon>Saccharomycetales</taxon>
        <taxon>Saccharomycetaceae</taxon>
        <taxon>Saccharomyces</taxon>
    </lineage>
</organism>
<protein>
    <recommendedName>
        <fullName>Pre-mRNA-splicing factor SLU7</fullName>
    </recommendedName>
    <alternativeName>
        <fullName>Synthetic lethal with U2 snRNA protein 17</fullName>
    </alternativeName>
    <alternativeName>
        <fullName>Synthetic lethal with U5 snRNA protein 7</fullName>
    </alternativeName>
</protein>
<reference key="1">
    <citation type="journal article" date="1992" name="Genes Dev.">
        <title>An essential splicing factor, SLU7, mediates 3' splice site choice in yeast.</title>
        <authorList>
            <person name="Frank D.N."/>
            <person name="Guthrie C."/>
        </authorList>
    </citation>
    <scope>NUCLEOTIDE SEQUENCE [GENOMIC DNA]</scope>
    <scope>FUNCTION</scope>
</reference>
<reference key="2">
    <citation type="journal article" date="1997" name="Nature">
        <title>The nucleotide sequence of Saccharomyces cerevisiae chromosome IV.</title>
        <authorList>
            <person name="Jacq C."/>
            <person name="Alt-Moerbe J."/>
            <person name="Andre B."/>
            <person name="Arnold W."/>
            <person name="Bahr A."/>
            <person name="Ballesta J.P.G."/>
            <person name="Bargues M."/>
            <person name="Baron L."/>
            <person name="Becker A."/>
            <person name="Biteau N."/>
            <person name="Bloecker H."/>
            <person name="Blugeon C."/>
            <person name="Boskovic J."/>
            <person name="Brandt P."/>
            <person name="Brueckner M."/>
            <person name="Buitrago M.J."/>
            <person name="Coster F."/>
            <person name="Delaveau T."/>
            <person name="del Rey F."/>
            <person name="Dujon B."/>
            <person name="Eide L.G."/>
            <person name="Garcia-Cantalejo J.M."/>
            <person name="Goffeau A."/>
            <person name="Gomez-Peris A."/>
            <person name="Granotier C."/>
            <person name="Hanemann V."/>
            <person name="Hankeln T."/>
            <person name="Hoheisel J.D."/>
            <person name="Jaeger W."/>
            <person name="Jimenez A."/>
            <person name="Jonniaux J.-L."/>
            <person name="Kraemer C."/>
            <person name="Kuester H."/>
            <person name="Laamanen P."/>
            <person name="Legros Y."/>
            <person name="Louis E.J."/>
            <person name="Moeller-Rieker S."/>
            <person name="Monnet A."/>
            <person name="Moro M."/>
            <person name="Mueller-Auer S."/>
            <person name="Nussbaumer B."/>
            <person name="Paricio N."/>
            <person name="Paulin L."/>
            <person name="Perea J."/>
            <person name="Perez-Alonso M."/>
            <person name="Perez-Ortin J.E."/>
            <person name="Pohl T.M."/>
            <person name="Prydz H."/>
            <person name="Purnelle B."/>
            <person name="Rasmussen S.W."/>
            <person name="Remacha M.A."/>
            <person name="Revuelta J.L."/>
            <person name="Rieger M."/>
            <person name="Salom D."/>
            <person name="Saluz H.P."/>
            <person name="Saiz J.E."/>
            <person name="Saren A.-M."/>
            <person name="Schaefer M."/>
            <person name="Scharfe M."/>
            <person name="Schmidt E.R."/>
            <person name="Schneider C."/>
            <person name="Scholler P."/>
            <person name="Schwarz S."/>
            <person name="Soler-Mira A."/>
            <person name="Urrestarazu L.A."/>
            <person name="Verhasselt P."/>
            <person name="Vissers S."/>
            <person name="Voet M."/>
            <person name="Volckaert G."/>
            <person name="Wagner G."/>
            <person name="Wambutt R."/>
            <person name="Wedler E."/>
            <person name="Wedler H."/>
            <person name="Woelfl S."/>
            <person name="Harris D.E."/>
            <person name="Bowman S."/>
            <person name="Brown D."/>
            <person name="Churcher C.M."/>
            <person name="Connor R."/>
            <person name="Dedman K."/>
            <person name="Gentles S."/>
            <person name="Hamlin N."/>
            <person name="Hunt S."/>
            <person name="Jones L."/>
            <person name="McDonald S."/>
            <person name="Murphy L.D."/>
            <person name="Niblett D."/>
            <person name="Odell C."/>
            <person name="Oliver K."/>
            <person name="Rajandream M.A."/>
            <person name="Richards C."/>
            <person name="Shore L."/>
            <person name="Walsh S.V."/>
            <person name="Barrell B.G."/>
            <person name="Dietrich F.S."/>
            <person name="Mulligan J.T."/>
            <person name="Allen E."/>
            <person name="Araujo R."/>
            <person name="Aviles E."/>
            <person name="Berno A."/>
            <person name="Carpenter J."/>
            <person name="Chen E."/>
            <person name="Cherry J.M."/>
            <person name="Chung E."/>
            <person name="Duncan M."/>
            <person name="Hunicke-Smith S."/>
            <person name="Hyman R.W."/>
            <person name="Komp C."/>
            <person name="Lashkari D."/>
            <person name="Lew H."/>
            <person name="Lin D."/>
            <person name="Mosedale D."/>
            <person name="Nakahara K."/>
            <person name="Namath A."/>
            <person name="Oefner P."/>
            <person name="Oh C."/>
            <person name="Petel F.X."/>
            <person name="Roberts D."/>
            <person name="Schramm S."/>
            <person name="Schroeder M."/>
            <person name="Shogren T."/>
            <person name="Shroff N."/>
            <person name="Winant A."/>
            <person name="Yelton M.A."/>
            <person name="Botstein D."/>
            <person name="Davis R.W."/>
            <person name="Johnston M."/>
            <person name="Andrews S."/>
            <person name="Brinkman R."/>
            <person name="Cooper J."/>
            <person name="Ding H."/>
            <person name="Du Z."/>
            <person name="Favello A."/>
            <person name="Fulton L."/>
            <person name="Gattung S."/>
            <person name="Greco T."/>
            <person name="Hallsworth K."/>
            <person name="Hawkins J."/>
            <person name="Hillier L.W."/>
            <person name="Jier M."/>
            <person name="Johnson D."/>
            <person name="Johnston L."/>
            <person name="Kirsten J."/>
            <person name="Kucaba T."/>
            <person name="Langston Y."/>
            <person name="Latreille P."/>
            <person name="Le T."/>
            <person name="Mardis E."/>
            <person name="Menezes S."/>
            <person name="Miller N."/>
            <person name="Nhan M."/>
            <person name="Pauley A."/>
            <person name="Peluso D."/>
            <person name="Rifkin L."/>
            <person name="Riles L."/>
            <person name="Taich A."/>
            <person name="Trevaskis E."/>
            <person name="Vignati D."/>
            <person name="Wilcox L."/>
            <person name="Wohldman P."/>
            <person name="Vaudin M."/>
            <person name="Wilson R."/>
            <person name="Waterston R."/>
            <person name="Albermann K."/>
            <person name="Hani J."/>
            <person name="Heumann K."/>
            <person name="Kleine K."/>
            <person name="Mewes H.-W."/>
            <person name="Zollner A."/>
            <person name="Zaccaria P."/>
        </authorList>
    </citation>
    <scope>NUCLEOTIDE SEQUENCE [LARGE SCALE GENOMIC DNA]</scope>
    <source>
        <strain>ATCC 204508 / S288c</strain>
    </source>
</reference>
<reference key="3">
    <citation type="journal article" date="2014" name="G3 (Bethesda)">
        <title>The reference genome sequence of Saccharomyces cerevisiae: Then and now.</title>
        <authorList>
            <person name="Engel S.R."/>
            <person name="Dietrich F.S."/>
            <person name="Fisk D.G."/>
            <person name="Binkley G."/>
            <person name="Balakrishnan R."/>
            <person name="Costanzo M.C."/>
            <person name="Dwight S.S."/>
            <person name="Hitz B.C."/>
            <person name="Karra K."/>
            <person name="Nash R.S."/>
            <person name="Weng S."/>
            <person name="Wong E.D."/>
            <person name="Lloyd P."/>
            <person name="Skrzypek M.S."/>
            <person name="Miyasato S.R."/>
            <person name="Simison M."/>
            <person name="Cherry J.M."/>
        </authorList>
    </citation>
    <scope>GENOME REANNOTATION</scope>
    <source>
        <strain>ATCC 204508 / S288c</strain>
    </source>
</reference>
<reference key="4">
    <citation type="journal article" date="2007" name="Genome Res.">
        <title>Approaching a complete repository of sequence-verified protein-encoding clones for Saccharomyces cerevisiae.</title>
        <authorList>
            <person name="Hu Y."/>
            <person name="Rolfs A."/>
            <person name="Bhullar B."/>
            <person name="Murthy T.V.S."/>
            <person name="Zhu C."/>
            <person name="Berger M.F."/>
            <person name="Camargo A.A."/>
            <person name="Kelley F."/>
            <person name="McCarron S."/>
            <person name="Jepson D."/>
            <person name="Richardson A."/>
            <person name="Raphael J."/>
            <person name="Moreira D."/>
            <person name="Taycher E."/>
            <person name="Zuo D."/>
            <person name="Mohr S."/>
            <person name="Kane M.F."/>
            <person name="Williamson J."/>
            <person name="Simpson A.J.G."/>
            <person name="Bulyk M.L."/>
            <person name="Harlow E."/>
            <person name="Marsischky G."/>
            <person name="Kolodner R.D."/>
            <person name="LaBaer J."/>
        </authorList>
    </citation>
    <scope>NUCLEOTIDE SEQUENCE [GENOMIC DNA]</scope>
    <source>
        <strain>ATCC 204508 / S288c</strain>
    </source>
</reference>
<reference key="5">
    <citation type="journal article" date="1992" name="Mol. Cell. Biol.">
        <title>Synthetic lethal mutations suggest interactions between U5 small nuclear RNA and four proteins required for the second step of splicing.</title>
        <authorList>
            <person name="Frank D.N."/>
            <person name="Patterson B."/>
            <person name="Guthrie C."/>
        </authorList>
    </citation>
    <scope>FUNCTION</scope>
</reference>
<reference key="6">
    <citation type="journal article" date="1995" name="EMBO J.">
        <title>SLU7 and a novel activity, SSF1, act during the PRP16-dependent step of yeast pre-mRNA splicing.</title>
        <authorList>
            <person name="Ansari A."/>
            <person name="Schwer B."/>
        </authorList>
    </citation>
    <scope>FUNCTION</scope>
</reference>
<reference key="7">
    <citation type="journal article" date="1995" name="Proc. Natl. Acad. Sci. U.S.A.">
        <title>Characterization and functional ordering of Slu7p and Prp17p during the second step of pre-mRNA splicing in yeast.</title>
        <authorList>
            <person name="Jones M.H."/>
            <person name="Frank D.N."/>
            <person name="Guthrie C."/>
        </authorList>
    </citation>
    <scope>FUNCTION</scope>
</reference>
<reference key="8">
    <citation type="journal article" date="1995" name="RNA">
        <title>Prp16p, Slu7p, and Prp8p interact with the 3' splice site in two distinct stages during the second catalytic step of pre-mRNA splicing.</title>
        <authorList>
            <person name="Umen J.G."/>
            <person name="Guthrie C."/>
        </authorList>
    </citation>
    <scope>INTERACTION WITH THE 3' SPLICE SITE</scope>
</reference>
<reference key="9">
    <citation type="journal article" date="1996" name="RNA">
        <title>Requirement for SLU7 in yeast pre-mRNA splicing is dictated by the distance between the branchpoint and the 3' splice site.</title>
        <authorList>
            <person name="Brys A."/>
            <person name="Schwer B."/>
        </authorList>
    </citation>
    <scope>FUNCTION</scope>
    <scope>ASSOCIATION WITH THE SPLICEOSOME</scope>
</reference>
<reference key="10">
    <citation type="journal article" date="1997" name="Nucleic Acids Res.">
        <title>Functional and physical interaction between the yeast splicing factors Slu7 and Prp18.</title>
        <authorList>
            <person name="Zhang X."/>
            <person name="Schwer B."/>
        </authorList>
    </citation>
    <scope>FUNCTION</scope>
    <scope>INTERACTION WITH PRP18</scope>
</reference>
<reference key="11">
    <citation type="journal article" date="1998" name="Mol. Cell. Biol.">
        <title>Synthetic lethality of yeast slt mutations with U2 small nuclear RNA mutations suggests functional interactions between U2 and U5 snRNPs that are important for both steps of pre-mRNA splicing.</title>
        <authorList>
            <person name="Xu D."/>
            <person name="Field D.J."/>
            <person name="Tang S.-J."/>
            <person name="Moris A."/>
            <person name="Bobechko B.P."/>
            <person name="Friesen J.D."/>
        </authorList>
    </citation>
    <scope>FUNCTION</scope>
</reference>
<reference key="12">
    <citation type="journal article" date="2000" name="Proc. Natl. Acad. Sci. U.S.A.">
        <title>Crystal structure of the functional domain of the splicing factor Prp18.</title>
        <authorList>
            <person name="Jiang J."/>
            <person name="Horowitz D.S."/>
            <person name="Xu R.-M."/>
        </authorList>
    </citation>
    <scope>INTERACTION WITH PRP18</scope>
</reference>
<reference key="13">
    <citation type="journal article" date="2001" name="Genetics">
        <title>Functional contacts with a range of splicing proteins suggest a central role for Brr2p in the dynamic control of the order of events in spliceosomes of Saccharomyces cerevisiae.</title>
        <authorList>
            <person name="van Nues R.W."/>
            <person name="Beggs J.D."/>
        </authorList>
    </citation>
    <scope>INTERACTION WITH BRR2; PRP18 AND PRP22</scope>
</reference>
<reference key="14">
    <citation type="journal article" date="2001" name="Mol. Cell. Biol.">
        <title>Splicing factor slt11p and its involvement in formation of U2/U6 helix II in activation of the yeast spliceosome.</title>
        <authorList>
            <person name="Xu D."/>
            <person name="Friesen J.D."/>
        </authorList>
    </citation>
    <scope>INTERACTION WITH ECM2</scope>
    <scope>FUNCTION</scope>
</reference>
<reference key="15">
    <citation type="journal article" date="2002" name="Mol. Cell. Biol.">
        <title>Proteomics analysis reveals stable multiprotein complexes in both fission and budding yeasts containing Myb-related Cdc5p/Cef1p, novel pre-mRNA splicing factors, and snRNAs.</title>
        <authorList>
            <person name="Ohi M.D."/>
            <person name="Link A.J."/>
            <person name="Ren L."/>
            <person name="Jennings J.L."/>
            <person name="McDonald W.H."/>
            <person name="Gould K.L."/>
        </authorList>
    </citation>
    <scope>IDENTIFICATION IN THE CWC COMPLEX</scope>
    <scope>IDENTIFICATION BY MASS SPECTROMETRY</scope>
</reference>
<reference key="16">
    <citation type="journal article" date="2002" name="RNA">
        <title>How Slu7 and Prp18 cooperate in the second step of yeast pre-mRNA splicing.</title>
        <authorList>
            <person name="James S.-A."/>
            <person name="Turner W."/>
            <person name="Schwer B."/>
        </authorList>
    </citation>
    <scope>FUNCTION</scope>
    <scope>INTERACTION WITH PRP18</scope>
    <scope>MUTAGENESIS OF CYS-122; HIS-130; CYS-135; 215-GLU--GLU-217; GLU-217 AND 221-LEU--TYR-224</scope>
</reference>
<reference key="17">
    <citation type="journal article" date="2002" name="RNA">
        <title>Mutational analysis identifies two separable roles of the Saccharomyces cerevisiae splicing factor Prp18.</title>
        <authorList>
            <person name="Bacikova D."/>
            <person name="Horowitz D.S."/>
        </authorList>
    </citation>
    <scope>INTERACTION WITH PRP18</scope>
</reference>
<reference key="18">
    <citation type="journal article" date="2003" name="Nature">
        <title>Global analysis of protein localization in budding yeast.</title>
        <authorList>
            <person name="Huh W.-K."/>
            <person name="Falvo J.V."/>
            <person name="Gerke L.C."/>
            <person name="Carroll A.S."/>
            <person name="Howson R.W."/>
            <person name="Weissman J.S."/>
            <person name="O'Shea E.K."/>
        </authorList>
    </citation>
    <scope>SUBCELLULAR LOCATION [LARGE SCALE ANALYSIS]</scope>
</reference>
<reference key="19">
    <citation type="journal article" date="2003" name="Nature">
        <title>Global analysis of protein expression in yeast.</title>
        <authorList>
            <person name="Ghaemmaghami S."/>
            <person name="Huh W.-K."/>
            <person name="Bower K."/>
            <person name="Howson R.W."/>
            <person name="Belle A."/>
            <person name="Dephoure N."/>
            <person name="O'Shea E.K."/>
            <person name="Weissman J.S."/>
        </authorList>
    </citation>
    <scope>LEVEL OF PROTEIN EXPRESSION [LARGE SCALE ANALYSIS]</scope>
</reference>
<reference key="20">
    <citation type="journal article" date="2007" name="J. Proteome Res.">
        <title>Large-scale phosphorylation analysis of alpha-factor-arrested Saccharomyces cerevisiae.</title>
        <authorList>
            <person name="Li X."/>
            <person name="Gerber S.A."/>
            <person name="Rudner A.D."/>
            <person name="Beausoleil S.A."/>
            <person name="Haas W."/>
            <person name="Villen J."/>
            <person name="Elias J.E."/>
            <person name="Gygi S.P."/>
        </authorList>
    </citation>
    <scope>PHOSPHORYLATION [LARGE SCALE ANALYSIS] AT THR-212</scope>
    <scope>IDENTIFICATION BY MASS SPECTROMETRY [LARGE SCALE ANALYSIS]</scope>
    <source>
        <strain>ADR376</strain>
    </source>
</reference>
<reference key="21">
    <citation type="journal article" date="2008" name="Mol. Cell. Proteomics">
        <title>A multidimensional chromatography technology for in-depth phosphoproteome analysis.</title>
        <authorList>
            <person name="Albuquerque C.P."/>
            <person name="Smolka M.B."/>
            <person name="Payne S.H."/>
            <person name="Bafna V."/>
            <person name="Eng J."/>
            <person name="Zhou H."/>
        </authorList>
    </citation>
    <scope>PHOSPHORYLATION [LARGE SCALE ANALYSIS] AT SER-120 AND THR-212</scope>
    <scope>IDENTIFICATION BY MASS SPECTROMETRY [LARGE SCALE ANALYSIS]</scope>
</reference>
<reference key="22">
    <citation type="journal article" date="2009" name="Mol. Syst. Biol.">
        <title>Global analysis of the glycoproteome in Saccharomyces cerevisiae reveals new roles for protein glycosylation in eukaryotes.</title>
        <authorList>
            <person name="Kung L.A."/>
            <person name="Tao S.-C."/>
            <person name="Qian J."/>
            <person name="Smith M.G."/>
            <person name="Snyder M."/>
            <person name="Zhu H."/>
        </authorList>
    </citation>
    <scope>GLYCOSYLATION [LARGE SCALE ANALYSIS]</scope>
</reference>
<reference key="23">
    <citation type="journal article" date="2009" name="Science">
        <title>Global analysis of Cdk1 substrate phosphorylation sites provides insights into evolution.</title>
        <authorList>
            <person name="Holt L.J."/>
            <person name="Tuch B.B."/>
            <person name="Villen J."/>
            <person name="Johnson A.D."/>
            <person name="Gygi S.P."/>
            <person name="Morgan D.O."/>
        </authorList>
    </citation>
    <scope>PHOSPHORYLATION [LARGE SCALE ANALYSIS] AT THR-212</scope>
    <scope>IDENTIFICATION BY MASS SPECTROMETRY [LARGE SCALE ANALYSIS]</scope>
</reference>
<gene>
    <name type="primary">SLU7</name>
    <name type="synonym">SLT17</name>
    <name type="ordered locus">YDR088C</name>
    <name type="ORF">D4483</name>
</gene>